<evidence type="ECO:0000255" key="1">
    <source>
        <dbReference type="HAMAP-Rule" id="MF_00367"/>
    </source>
</evidence>
<evidence type="ECO:0000255" key="2">
    <source>
        <dbReference type="PROSITE-ProRule" id="PRU01050"/>
    </source>
</evidence>
<reference key="1">
    <citation type="journal article" date="2005" name="J. Bacteriol.">
        <title>Whole-genome sequence analysis of Pseudomonas syringae pv. phaseolicola 1448A reveals divergence among pathovars in genes involved in virulence and transposition.</title>
        <authorList>
            <person name="Joardar V."/>
            <person name="Lindeberg M."/>
            <person name="Jackson R.W."/>
            <person name="Selengut J."/>
            <person name="Dodson R."/>
            <person name="Brinkac L.M."/>
            <person name="Daugherty S.C."/>
            <person name="DeBoy R.T."/>
            <person name="Durkin A.S."/>
            <person name="Gwinn Giglio M."/>
            <person name="Madupu R."/>
            <person name="Nelson W.C."/>
            <person name="Rosovitz M.J."/>
            <person name="Sullivan S.A."/>
            <person name="Crabtree J."/>
            <person name="Creasy T."/>
            <person name="Davidsen T.M."/>
            <person name="Haft D.H."/>
            <person name="Zafar N."/>
            <person name="Zhou L."/>
            <person name="Halpin R."/>
            <person name="Holley T."/>
            <person name="Khouri H.M."/>
            <person name="Feldblyum T.V."/>
            <person name="White O."/>
            <person name="Fraser C.M."/>
            <person name="Chatterjee A.K."/>
            <person name="Cartinhour S."/>
            <person name="Schneider D."/>
            <person name="Mansfield J.W."/>
            <person name="Collmer A."/>
            <person name="Buell R."/>
        </authorList>
    </citation>
    <scope>NUCLEOTIDE SEQUENCE [LARGE SCALE GENOMIC DNA]</scope>
    <source>
        <strain>1448A / Race 6</strain>
    </source>
</reference>
<name>ERA_PSE14</name>
<dbReference type="EMBL" id="CP000058">
    <property type="protein sequence ID" value="AAZ37933.1"/>
    <property type="molecule type" value="Genomic_DNA"/>
</dbReference>
<dbReference type="RefSeq" id="WP_003363707.1">
    <property type="nucleotide sequence ID" value="NC_005773.3"/>
</dbReference>
<dbReference type="SMR" id="Q48EV4"/>
<dbReference type="GeneID" id="77279804"/>
<dbReference type="KEGG" id="psp:PSPPH_3947"/>
<dbReference type="eggNOG" id="COG1159">
    <property type="taxonomic scope" value="Bacteria"/>
</dbReference>
<dbReference type="HOGENOM" id="CLU_038009_1_2_6"/>
<dbReference type="Proteomes" id="UP000000551">
    <property type="component" value="Chromosome"/>
</dbReference>
<dbReference type="GO" id="GO:0005829">
    <property type="term" value="C:cytosol"/>
    <property type="evidence" value="ECO:0007669"/>
    <property type="project" value="TreeGrafter"/>
</dbReference>
<dbReference type="GO" id="GO:0005886">
    <property type="term" value="C:plasma membrane"/>
    <property type="evidence" value="ECO:0007669"/>
    <property type="project" value="UniProtKB-SubCell"/>
</dbReference>
<dbReference type="GO" id="GO:0005525">
    <property type="term" value="F:GTP binding"/>
    <property type="evidence" value="ECO:0007669"/>
    <property type="project" value="UniProtKB-UniRule"/>
</dbReference>
<dbReference type="GO" id="GO:0003924">
    <property type="term" value="F:GTPase activity"/>
    <property type="evidence" value="ECO:0007669"/>
    <property type="project" value="UniProtKB-UniRule"/>
</dbReference>
<dbReference type="GO" id="GO:0043024">
    <property type="term" value="F:ribosomal small subunit binding"/>
    <property type="evidence" value="ECO:0007669"/>
    <property type="project" value="TreeGrafter"/>
</dbReference>
<dbReference type="GO" id="GO:0070181">
    <property type="term" value="F:small ribosomal subunit rRNA binding"/>
    <property type="evidence" value="ECO:0007669"/>
    <property type="project" value="UniProtKB-UniRule"/>
</dbReference>
<dbReference type="GO" id="GO:0000028">
    <property type="term" value="P:ribosomal small subunit assembly"/>
    <property type="evidence" value="ECO:0007669"/>
    <property type="project" value="TreeGrafter"/>
</dbReference>
<dbReference type="CDD" id="cd04163">
    <property type="entry name" value="Era"/>
    <property type="match status" value="1"/>
</dbReference>
<dbReference type="CDD" id="cd22534">
    <property type="entry name" value="KH-II_Era"/>
    <property type="match status" value="1"/>
</dbReference>
<dbReference type="FunFam" id="3.30.300.20:FF:000003">
    <property type="entry name" value="GTPase Era"/>
    <property type="match status" value="1"/>
</dbReference>
<dbReference type="FunFam" id="3.40.50.300:FF:000094">
    <property type="entry name" value="GTPase Era"/>
    <property type="match status" value="1"/>
</dbReference>
<dbReference type="Gene3D" id="3.30.300.20">
    <property type="match status" value="1"/>
</dbReference>
<dbReference type="Gene3D" id="3.40.50.300">
    <property type="entry name" value="P-loop containing nucleotide triphosphate hydrolases"/>
    <property type="match status" value="1"/>
</dbReference>
<dbReference type="HAMAP" id="MF_00367">
    <property type="entry name" value="GTPase_Era"/>
    <property type="match status" value="1"/>
</dbReference>
<dbReference type="InterPro" id="IPR030388">
    <property type="entry name" value="G_ERA_dom"/>
</dbReference>
<dbReference type="InterPro" id="IPR006073">
    <property type="entry name" value="GTP-bd"/>
</dbReference>
<dbReference type="InterPro" id="IPR005662">
    <property type="entry name" value="GTPase_Era-like"/>
</dbReference>
<dbReference type="InterPro" id="IPR015946">
    <property type="entry name" value="KH_dom-like_a/b"/>
</dbReference>
<dbReference type="InterPro" id="IPR004044">
    <property type="entry name" value="KH_dom_type_2"/>
</dbReference>
<dbReference type="InterPro" id="IPR009019">
    <property type="entry name" value="KH_sf_prok-type"/>
</dbReference>
<dbReference type="InterPro" id="IPR027417">
    <property type="entry name" value="P-loop_NTPase"/>
</dbReference>
<dbReference type="InterPro" id="IPR005225">
    <property type="entry name" value="Small_GTP-bd"/>
</dbReference>
<dbReference type="NCBIfam" id="TIGR00436">
    <property type="entry name" value="era"/>
    <property type="match status" value="1"/>
</dbReference>
<dbReference type="NCBIfam" id="NF000908">
    <property type="entry name" value="PRK00089.1"/>
    <property type="match status" value="1"/>
</dbReference>
<dbReference type="NCBIfam" id="TIGR00231">
    <property type="entry name" value="small_GTP"/>
    <property type="match status" value="1"/>
</dbReference>
<dbReference type="PANTHER" id="PTHR42698">
    <property type="entry name" value="GTPASE ERA"/>
    <property type="match status" value="1"/>
</dbReference>
<dbReference type="PANTHER" id="PTHR42698:SF1">
    <property type="entry name" value="GTPASE ERA, MITOCHONDRIAL"/>
    <property type="match status" value="1"/>
</dbReference>
<dbReference type="Pfam" id="PF07650">
    <property type="entry name" value="KH_2"/>
    <property type="match status" value="1"/>
</dbReference>
<dbReference type="Pfam" id="PF01926">
    <property type="entry name" value="MMR_HSR1"/>
    <property type="match status" value="1"/>
</dbReference>
<dbReference type="PRINTS" id="PR00326">
    <property type="entry name" value="GTP1OBG"/>
</dbReference>
<dbReference type="SUPFAM" id="SSF52540">
    <property type="entry name" value="P-loop containing nucleoside triphosphate hydrolases"/>
    <property type="match status" value="1"/>
</dbReference>
<dbReference type="SUPFAM" id="SSF54814">
    <property type="entry name" value="Prokaryotic type KH domain (KH-domain type II)"/>
    <property type="match status" value="1"/>
</dbReference>
<dbReference type="PROSITE" id="PS51713">
    <property type="entry name" value="G_ERA"/>
    <property type="match status" value="1"/>
</dbReference>
<dbReference type="PROSITE" id="PS50823">
    <property type="entry name" value="KH_TYPE_2"/>
    <property type="match status" value="1"/>
</dbReference>
<keyword id="KW-0997">Cell inner membrane</keyword>
<keyword id="KW-1003">Cell membrane</keyword>
<keyword id="KW-0963">Cytoplasm</keyword>
<keyword id="KW-0342">GTP-binding</keyword>
<keyword id="KW-0472">Membrane</keyword>
<keyword id="KW-0547">Nucleotide-binding</keyword>
<keyword id="KW-0690">Ribosome biogenesis</keyword>
<keyword id="KW-0694">RNA-binding</keyword>
<keyword id="KW-0699">rRNA-binding</keyword>
<protein>
    <recommendedName>
        <fullName evidence="1">GTPase Era</fullName>
    </recommendedName>
</protein>
<sequence length="300" mass="33892">MNDTTATRCGYVAIVGRPNVGKSTLLNHILGQKLAITSRKPQTTRHNMLGIKTEGAVQAIYVDTPGMHKNGEKALNRYMNKTASAALKDVDVVIFVVDRTRWTDEDQMVLERVQYVQGPVILAINKTDRIEDKSDLMPHLEWLQGQLPNASIVPISAQHGHNLEALESLIASHLPENDHFFPEDQITDRSSRFLAAELVREKIMRQLGAELPYQITVEIEEFKQQGRTLHIHALILVERDGQKKIIIGDKGDRIKRIGSDARRDMELLFDSKVMLNLWVKVKGGWSDDERALRSLGYGDL</sequence>
<comment type="function">
    <text evidence="1">An essential GTPase that binds both GDP and GTP, with rapid nucleotide exchange. Plays a role in 16S rRNA processing and 30S ribosomal subunit biogenesis and possibly also in cell cycle regulation and energy metabolism.</text>
</comment>
<comment type="subunit">
    <text evidence="1">Monomer.</text>
</comment>
<comment type="subcellular location">
    <subcellularLocation>
        <location>Cytoplasm</location>
    </subcellularLocation>
    <subcellularLocation>
        <location evidence="1">Cell inner membrane</location>
        <topology evidence="1">Peripheral membrane protein</topology>
    </subcellularLocation>
</comment>
<comment type="similarity">
    <text evidence="1 2">Belongs to the TRAFAC class TrmE-Era-EngA-EngB-Septin-like GTPase superfamily. Era GTPase family.</text>
</comment>
<feature type="chain" id="PRO_1000079718" description="GTPase Era">
    <location>
        <begin position="1"/>
        <end position="300"/>
    </location>
</feature>
<feature type="domain" description="Era-type G" evidence="2">
    <location>
        <begin position="8"/>
        <end position="176"/>
    </location>
</feature>
<feature type="domain" description="KH type-2" evidence="1">
    <location>
        <begin position="199"/>
        <end position="283"/>
    </location>
</feature>
<feature type="region of interest" description="G1" evidence="2">
    <location>
        <begin position="16"/>
        <end position="23"/>
    </location>
</feature>
<feature type="region of interest" description="G2" evidence="2">
    <location>
        <begin position="42"/>
        <end position="46"/>
    </location>
</feature>
<feature type="region of interest" description="G3" evidence="2">
    <location>
        <begin position="63"/>
        <end position="66"/>
    </location>
</feature>
<feature type="region of interest" description="G4" evidence="2">
    <location>
        <begin position="125"/>
        <end position="128"/>
    </location>
</feature>
<feature type="region of interest" description="G5" evidence="2">
    <location>
        <begin position="155"/>
        <end position="157"/>
    </location>
</feature>
<feature type="binding site" evidence="1">
    <location>
        <begin position="16"/>
        <end position="23"/>
    </location>
    <ligand>
        <name>GTP</name>
        <dbReference type="ChEBI" id="CHEBI:37565"/>
    </ligand>
</feature>
<feature type="binding site" evidence="1">
    <location>
        <begin position="63"/>
        <end position="67"/>
    </location>
    <ligand>
        <name>GTP</name>
        <dbReference type="ChEBI" id="CHEBI:37565"/>
    </ligand>
</feature>
<feature type="binding site" evidence="1">
    <location>
        <begin position="125"/>
        <end position="128"/>
    </location>
    <ligand>
        <name>GTP</name>
        <dbReference type="ChEBI" id="CHEBI:37565"/>
    </ligand>
</feature>
<proteinExistence type="inferred from homology"/>
<accession>Q48EV4</accession>
<organism>
    <name type="scientific">Pseudomonas savastanoi pv. phaseolicola (strain 1448A / Race 6)</name>
    <name type="common">Pseudomonas syringae pv. phaseolicola (strain 1448A / Race 6)</name>
    <dbReference type="NCBI Taxonomy" id="264730"/>
    <lineage>
        <taxon>Bacteria</taxon>
        <taxon>Pseudomonadati</taxon>
        <taxon>Pseudomonadota</taxon>
        <taxon>Gammaproteobacteria</taxon>
        <taxon>Pseudomonadales</taxon>
        <taxon>Pseudomonadaceae</taxon>
        <taxon>Pseudomonas</taxon>
    </lineage>
</organism>
<gene>
    <name evidence="1" type="primary">era</name>
    <name type="ordered locus">PSPPH_3947</name>
</gene>